<evidence type="ECO:0000255" key="1">
    <source>
        <dbReference type="HAMAP-Rule" id="MF_00087"/>
    </source>
</evidence>
<keyword id="KW-0521">NADP</keyword>
<keyword id="KW-0560">Oxidoreductase</keyword>
<keyword id="KW-0627">Porphyrin biosynthesis</keyword>
<name>HEM1_DESDA</name>
<dbReference type="EC" id="1.2.1.70" evidence="1"/>
<dbReference type="EMBL" id="CP001358">
    <property type="protein sequence ID" value="ACL48866.1"/>
    <property type="molecule type" value="Genomic_DNA"/>
</dbReference>
<dbReference type="SMR" id="B8IZD9"/>
<dbReference type="STRING" id="525146.Ddes_0959"/>
<dbReference type="KEGG" id="dds:Ddes_0959"/>
<dbReference type="eggNOG" id="COG0373">
    <property type="taxonomic scope" value="Bacteria"/>
</dbReference>
<dbReference type="HOGENOM" id="CLU_035113_2_2_7"/>
<dbReference type="UniPathway" id="UPA00251">
    <property type="reaction ID" value="UER00316"/>
</dbReference>
<dbReference type="GO" id="GO:0008883">
    <property type="term" value="F:glutamyl-tRNA reductase activity"/>
    <property type="evidence" value="ECO:0007669"/>
    <property type="project" value="UniProtKB-UniRule"/>
</dbReference>
<dbReference type="GO" id="GO:0050661">
    <property type="term" value="F:NADP binding"/>
    <property type="evidence" value="ECO:0007669"/>
    <property type="project" value="InterPro"/>
</dbReference>
<dbReference type="GO" id="GO:0019353">
    <property type="term" value="P:protoporphyrinogen IX biosynthetic process from glutamate"/>
    <property type="evidence" value="ECO:0007669"/>
    <property type="project" value="TreeGrafter"/>
</dbReference>
<dbReference type="CDD" id="cd05213">
    <property type="entry name" value="NAD_bind_Glutamyl_tRNA_reduct"/>
    <property type="match status" value="1"/>
</dbReference>
<dbReference type="FunFam" id="3.30.460.30:FF:000001">
    <property type="entry name" value="Glutamyl-tRNA reductase"/>
    <property type="match status" value="1"/>
</dbReference>
<dbReference type="FunFam" id="3.40.50.720:FF:000031">
    <property type="entry name" value="Glutamyl-tRNA reductase"/>
    <property type="match status" value="1"/>
</dbReference>
<dbReference type="Gene3D" id="3.30.460.30">
    <property type="entry name" value="Glutamyl-tRNA reductase, N-terminal domain"/>
    <property type="match status" value="1"/>
</dbReference>
<dbReference type="Gene3D" id="3.40.50.720">
    <property type="entry name" value="NAD(P)-binding Rossmann-like Domain"/>
    <property type="match status" value="1"/>
</dbReference>
<dbReference type="HAMAP" id="MF_00087">
    <property type="entry name" value="Glu_tRNA_reductase"/>
    <property type="match status" value="1"/>
</dbReference>
<dbReference type="InterPro" id="IPR000343">
    <property type="entry name" value="4pyrrol_synth_GluRdtase"/>
</dbReference>
<dbReference type="InterPro" id="IPR015896">
    <property type="entry name" value="4pyrrol_synth_GluRdtase_dimer"/>
</dbReference>
<dbReference type="InterPro" id="IPR015895">
    <property type="entry name" value="4pyrrol_synth_GluRdtase_N"/>
</dbReference>
<dbReference type="InterPro" id="IPR018214">
    <property type="entry name" value="GluRdtase_CS"/>
</dbReference>
<dbReference type="InterPro" id="IPR036453">
    <property type="entry name" value="GluRdtase_dimer_dom_sf"/>
</dbReference>
<dbReference type="InterPro" id="IPR036343">
    <property type="entry name" value="GluRdtase_N_sf"/>
</dbReference>
<dbReference type="InterPro" id="IPR036291">
    <property type="entry name" value="NAD(P)-bd_dom_sf"/>
</dbReference>
<dbReference type="InterPro" id="IPR006151">
    <property type="entry name" value="Shikm_DH/Glu-tRNA_Rdtase"/>
</dbReference>
<dbReference type="NCBIfam" id="TIGR01035">
    <property type="entry name" value="hemA"/>
    <property type="match status" value="1"/>
</dbReference>
<dbReference type="PANTHER" id="PTHR43013">
    <property type="entry name" value="GLUTAMYL-TRNA REDUCTASE"/>
    <property type="match status" value="1"/>
</dbReference>
<dbReference type="PANTHER" id="PTHR43013:SF1">
    <property type="entry name" value="GLUTAMYL-TRNA REDUCTASE"/>
    <property type="match status" value="1"/>
</dbReference>
<dbReference type="Pfam" id="PF00745">
    <property type="entry name" value="GlutR_dimer"/>
    <property type="match status" value="1"/>
</dbReference>
<dbReference type="Pfam" id="PF05201">
    <property type="entry name" value="GlutR_N"/>
    <property type="match status" value="1"/>
</dbReference>
<dbReference type="Pfam" id="PF01488">
    <property type="entry name" value="Shikimate_DH"/>
    <property type="match status" value="1"/>
</dbReference>
<dbReference type="PIRSF" id="PIRSF000445">
    <property type="entry name" value="4pyrrol_synth_GluRdtase"/>
    <property type="match status" value="1"/>
</dbReference>
<dbReference type="SUPFAM" id="SSF69742">
    <property type="entry name" value="Glutamyl tRNA-reductase catalytic, N-terminal domain"/>
    <property type="match status" value="1"/>
</dbReference>
<dbReference type="SUPFAM" id="SSF69075">
    <property type="entry name" value="Glutamyl tRNA-reductase dimerization domain"/>
    <property type="match status" value="1"/>
</dbReference>
<dbReference type="SUPFAM" id="SSF51735">
    <property type="entry name" value="NAD(P)-binding Rossmann-fold domains"/>
    <property type="match status" value="1"/>
</dbReference>
<dbReference type="PROSITE" id="PS00747">
    <property type="entry name" value="GLUTR"/>
    <property type="match status" value="1"/>
</dbReference>
<accession>B8IZD9</accession>
<proteinExistence type="inferred from homology"/>
<gene>
    <name evidence="1" type="primary">hemA</name>
    <name type="ordered locus">Ddes_0959</name>
</gene>
<protein>
    <recommendedName>
        <fullName evidence="1">Glutamyl-tRNA reductase</fullName>
        <shortName evidence="1">GluTR</shortName>
        <ecNumber evidence="1">1.2.1.70</ecNumber>
    </recommendedName>
</protein>
<sequence>MDCDIFLVGLNHRTAGVDVRERFALANHCDEEHWALPCTGAVSESIILSTCNRVEILAAGTGEVAEQVLRNWAGARKSDVEDLRPYVYVHKNLEAVRHLFSVASSLDSMVLGEPQILGQLKTAYRKAVKSRATGVILNRLLHKAFSVAKRVRTETAVASSAVSISYAAVELAKRIFGDMRAHKAMLVGAGEMAELAAMHLLQAGIADILVANRTLVRGQELAKQFNGHAIPFEDMPRHLLDVDIIITSTGSQEPIIRARDIRAALKIRKNRPMFFIDIAVPRDIDPDVNGLDNVYLYDIDDLKEVVEENLATRRDEAAKAAEIVNEEVVQFSRWLASLDMQPTIVDLIKKGQRAAEEELAKTLKRLGPVDDNTREALEAMAGALVRKLNHDPIMFLKHGGMSQEGNGPRISIMRRIFNLDKTGCIYSEEN</sequence>
<feature type="chain" id="PRO_1000190520" description="Glutamyl-tRNA reductase">
    <location>
        <begin position="1"/>
        <end position="430"/>
    </location>
</feature>
<feature type="active site" description="Nucleophile" evidence="1">
    <location>
        <position position="51"/>
    </location>
</feature>
<feature type="binding site" evidence="1">
    <location>
        <begin position="50"/>
        <end position="53"/>
    </location>
    <ligand>
        <name>substrate</name>
    </ligand>
</feature>
<feature type="binding site" evidence="1">
    <location>
        <position position="108"/>
    </location>
    <ligand>
        <name>substrate</name>
    </ligand>
</feature>
<feature type="binding site" evidence="1">
    <location>
        <begin position="113"/>
        <end position="115"/>
    </location>
    <ligand>
        <name>substrate</name>
    </ligand>
</feature>
<feature type="binding site" evidence="1">
    <location>
        <position position="119"/>
    </location>
    <ligand>
        <name>substrate</name>
    </ligand>
</feature>
<feature type="binding site" evidence="1">
    <location>
        <begin position="188"/>
        <end position="193"/>
    </location>
    <ligand>
        <name>NADP(+)</name>
        <dbReference type="ChEBI" id="CHEBI:58349"/>
    </ligand>
</feature>
<feature type="site" description="Important for activity" evidence="1">
    <location>
        <position position="98"/>
    </location>
</feature>
<reference key="1">
    <citation type="submission" date="2009-01" db="EMBL/GenBank/DDBJ databases">
        <title>Complete sequence of Desulfovibrio desulfuricans subsp. desulfuricans str. ATCC 27774.</title>
        <authorList>
            <consortium name="US DOE Joint Genome Institute"/>
            <person name="Lucas S."/>
            <person name="Copeland A."/>
            <person name="Lapidus A."/>
            <person name="Glavina del Rio T."/>
            <person name="Tice H."/>
            <person name="Bruce D."/>
            <person name="Goodwin L."/>
            <person name="Pitluck S."/>
            <person name="Sims D."/>
            <person name="Lu M."/>
            <person name="Kiss H."/>
            <person name="Meineke L."/>
            <person name="Brettin T."/>
            <person name="Detter J.C."/>
            <person name="Han C."/>
            <person name="Larimer F."/>
            <person name="Land M."/>
            <person name="Hauser L."/>
            <person name="Kyrpides N."/>
            <person name="Ovchinnikova G."/>
            <person name="Hazen T.C."/>
        </authorList>
    </citation>
    <scope>NUCLEOTIDE SEQUENCE [LARGE SCALE GENOMIC DNA]</scope>
    <source>
        <strain>ATCC 27774 / DSM 6949 / MB</strain>
    </source>
</reference>
<organism>
    <name type="scientific">Desulfovibrio desulfuricans (strain ATCC 27774 / DSM 6949 / MB)</name>
    <dbReference type="NCBI Taxonomy" id="525146"/>
    <lineage>
        <taxon>Bacteria</taxon>
        <taxon>Pseudomonadati</taxon>
        <taxon>Thermodesulfobacteriota</taxon>
        <taxon>Desulfovibrionia</taxon>
        <taxon>Desulfovibrionales</taxon>
        <taxon>Desulfovibrionaceae</taxon>
        <taxon>Desulfovibrio</taxon>
    </lineage>
</organism>
<comment type="function">
    <text evidence="1">Catalyzes the NADPH-dependent reduction of glutamyl-tRNA(Glu) to glutamate 1-semialdehyde (GSA).</text>
</comment>
<comment type="catalytic activity">
    <reaction evidence="1">
        <text>(S)-4-amino-5-oxopentanoate + tRNA(Glu) + NADP(+) = L-glutamyl-tRNA(Glu) + NADPH + H(+)</text>
        <dbReference type="Rhea" id="RHEA:12344"/>
        <dbReference type="Rhea" id="RHEA-COMP:9663"/>
        <dbReference type="Rhea" id="RHEA-COMP:9680"/>
        <dbReference type="ChEBI" id="CHEBI:15378"/>
        <dbReference type="ChEBI" id="CHEBI:57501"/>
        <dbReference type="ChEBI" id="CHEBI:57783"/>
        <dbReference type="ChEBI" id="CHEBI:58349"/>
        <dbReference type="ChEBI" id="CHEBI:78442"/>
        <dbReference type="ChEBI" id="CHEBI:78520"/>
        <dbReference type="EC" id="1.2.1.70"/>
    </reaction>
</comment>
<comment type="pathway">
    <text evidence="1">Porphyrin-containing compound metabolism; protoporphyrin-IX biosynthesis; 5-aminolevulinate from L-glutamyl-tRNA(Glu): step 1/2.</text>
</comment>
<comment type="subunit">
    <text evidence="1">Homodimer.</text>
</comment>
<comment type="domain">
    <text evidence="1">Possesses an unusual extended V-shaped dimeric structure with each monomer consisting of three distinct domains arranged along a curved 'spinal' alpha-helix. The N-terminal catalytic domain specifically recognizes the glutamate moiety of the substrate. The second domain is the NADPH-binding domain, and the third C-terminal domain is responsible for dimerization.</text>
</comment>
<comment type="miscellaneous">
    <text evidence="1">During catalysis, the active site Cys acts as a nucleophile attacking the alpha-carbonyl group of tRNA-bound glutamate with the formation of a thioester intermediate between enzyme and glutamate, and the concomitant release of tRNA(Glu). The thioester intermediate is finally reduced by direct hydride transfer from NADPH, to form the product GSA.</text>
</comment>
<comment type="similarity">
    <text evidence="1">Belongs to the glutamyl-tRNA reductase family.</text>
</comment>